<name>KTHY_CAUVC</name>
<organism>
    <name type="scientific">Caulobacter vibrioides (strain ATCC 19089 / CIP 103742 / CB 15)</name>
    <name type="common">Caulobacter crescentus</name>
    <dbReference type="NCBI Taxonomy" id="190650"/>
    <lineage>
        <taxon>Bacteria</taxon>
        <taxon>Pseudomonadati</taxon>
        <taxon>Pseudomonadota</taxon>
        <taxon>Alphaproteobacteria</taxon>
        <taxon>Caulobacterales</taxon>
        <taxon>Caulobacteraceae</taxon>
        <taxon>Caulobacter</taxon>
    </lineage>
</organism>
<keyword id="KW-0067">ATP-binding</keyword>
<keyword id="KW-0418">Kinase</keyword>
<keyword id="KW-0545">Nucleotide biosynthesis</keyword>
<keyword id="KW-0547">Nucleotide-binding</keyword>
<keyword id="KW-1185">Reference proteome</keyword>
<keyword id="KW-0808">Transferase</keyword>
<evidence type="ECO:0000250" key="1"/>
<evidence type="ECO:0000255" key="2"/>
<evidence type="ECO:0000305" key="3"/>
<gene>
    <name type="primary">tmk</name>
    <name type="ordered locus">CC_1824</name>
</gene>
<proteinExistence type="inferred from homology"/>
<sequence length="208" mass="22107">MTQGFFISFEGGEGAGKSTQIRRLADRLKAAGHDVIVTREPGGSPGAEAIRELLVNGAADRWSPVTESLLMYAARRDHIERVIRPGLARGAVVLCDRFADSTRAYQGAGGDAPASLIAALEEHVLGGTVPVLTLILDLPAEVGLQRAEARGGAARFESKGLAFHERLRAGYLEIARREPDRCVVIDADAELDAVTAAISDVVVQRLGL</sequence>
<dbReference type="EC" id="2.7.4.9"/>
<dbReference type="EMBL" id="AF099189">
    <property type="protein sequence ID" value="AAF06831.1"/>
    <property type="molecule type" value="Genomic_DNA"/>
</dbReference>
<dbReference type="EMBL" id="AE005673">
    <property type="protein sequence ID" value="AAK23799.1"/>
    <property type="molecule type" value="Genomic_DNA"/>
</dbReference>
<dbReference type="PIR" id="C87475">
    <property type="entry name" value="C87475"/>
</dbReference>
<dbReference type="RefSeq" id="NP_420631.1">
    <property type="nucleotide sequence ID" value="NC_002696.2"/>
</dbReference>
<dbReference type="RefSeq" id="WP_010919690.1">
    <property type="nucleotide sequence ID" value="NC_002696.2"/>
</dbReference>
<dbReference type="SMR" id="Q9RQJ9"/>
<dbReference type="STRING" id="190650.CC_1824"/>
<dbReference type="EnsemblBacteria" id="AAK23799">
    <property type="protein sequence ID" value="AAK23799"/>
    <property type="gene ID" value="CC_1824"/>
</dbReference>
<dbReference type="KEGG" id="ccr:CC_1824"/>
<dbReference type="PATRIC" id="fig|190650.5.peg.1842"/>
<dbReference type="eggNOG" id="COG0125">
    <property type="taxonomic scope" value="Bacteria"/>
</dbReference>
<dbReference type="HOGENOM" id="CLU_049131_0_0_5"/>
<dbReference type="BioCyc" id="CAULO:CC1824-MONOMER"/>
<dbReference type="Proteomes" id="UP000001816">
    <property type="component" value="Chromosome"/>
</dbReference>
<dbReference type="GO" id="GO:0005829">
    <property type="term" value="C:cytosol"/>
    <property type="evidence" value="ECO:0007669"/>
    <property type="project" value="TreeGrafter"/>
</dbReference>
<dbReference type="GO" id="GO:0005524">
    <property type="term" value="F:ATP binding"/>
    <property type="evidence" value="ECO:0007669"/>
    <property type="project" value="UniProtKB-UniRule"/>
</dbReference>
<dbReference type="GO" id="GO:0004798">
    <property type="term" value="F:dTMP kinase activity"/>
    <property type="evidence" value="ECO:0007669"/>
    <property type="project" value="UniProtKB-UniRule"/>
</dbReference>
<dbReference type="GO" id="GO:0006233">
    <property type="term" value="P:dTDP biosynthetic process"/>
    <property type="evidence" value="ECO:0007669"/>
    <property type="project" value="InterPro"/>
</dbReference>
<dbReference type="GO" id="GO:0006235">
    <property type="term" value="P:dTTP biosynthetic process"/>
    <property type="evidence" value="ECO:0007669"/>
    <property type="project" value="UniProtKB-UniRule"/>
</dbReference>
<dbReference type="GO" id="GO:0006227">
    <property type="term" value="P:dUDP biosynthetic process"/>
    <property type="evidence" value="ECO:0007669"/>
    <property type="project" value="TreeGrafter"/>
</dbReference>
<dbReference type="CDD" id="cd01672">
    <property type="entry name" value="TMPK"/>
    <property type="match status" value="1"/>
</dbReference>
<dbReference type="FunFam" id="3.40.50.300:FF:000225">
    <property type="entry name" value="Thymidylate kinase"/>
    <property type="match status" value="1"/>
</dbReference>
<dbReference type="Gene3D" id="3.40.50.300">
    <property type="entry name" value="P-loop containing nucleotide triphosphate hydrolases"/>
    <property type="match status" value="1"/>
</dbReference>
<dbReference type="HAMAP" id="MF_00165">
    <property type="entry name" value="Thymidylate_kinase"/>
    <property type="match status" value="1"/>
</dbReference>
<dbReference type="InterPro" id="IPR027417">
    <property type="entry name" value="P-loop_NTPase"/>
</dbReference>
<dbReference type="InterPro" id="IPR039430">
    <property type="entry name" value="Thymidylate_kin-like_dom"/>
</dbReference>
<dbReference type="InterPro" id="IPR018095">
    <property type="entry name" value="Thymidylate_kin_CS"/>
</dbReference>
<dbReference type="InterPro" id="IPR018094">
    <property type="entry name" value="Thymidylate_kinase"/>
</dbReference>
<dbReference type="NCBIfam" id="TIGR00041">
    <property type="entry name" value="DTMP_kinase"/>
    <property type="match status" value="1"/>
</dbReference>
<dbReference type="PANTHER" id="PTHR10344">
    <property type="entry name" value="THYMIDYLATE KINASE"/>
    <property type="match status" value="1"/>
</dbReference>
<dbReference type="PANTHER" id="PTHR10344:SF4">
    <property type="entry name" value="UMP-CMP KINASE 2, MITOCHONDRIAL"/>
    <property type="match status" value="1"/>
</dbReference>
<dbReference type="Pfam" id="PF02223">
    <property type="entry name" value="Thymidylate_kin"/>
    <property type="match status" value="1"/>
</dbReference>
<dbReference type="SUPFAM" id="SSF52540">
    <property type="entry name" value="P-loop containing nucleoside triphosphate hydrolases"/>
    <property type="match status" value="1"/>
</dbReference>
<dbReference type="PROSITE" id="PS01331">
    <property type="entry name" value="THYMIDYLATE_KINASE"/>
    <property type="match status" value="1"/>
</dbReference>
<accession>Q9RQJ9</accession>
<comment type="function">
    <text evidence="1">Phosphorylation of dTMP to form dTDP in both de novo and salvage pathways of dTTP synthesis.</text>
</comment>
<comment type="catalytic activity">
    <reaction>
        <text>dTMP + ATP = dTDP + ADP</text>
        <dbReference type="Rhea" id="RHEA:13517"/>
        <dbReference type="ChEBI" id="CHEBI:30616"/>
        <dbReference type="ChEBI" id="CHEBI:58369"/>
        <dbReference type="ChEBI" id="CHEBI:63528"/>
        <dbReference type="ChEBI" id="CHEBI:456216"/>
        <dbReference type="EC" id="2.7.4.9"/>
    </reaction>
</comment>
<comment type="similarity">
    <text evidence="3">Belongs to the thymidylate kinase family.</text>
</comment>
<reference key="1">
    <citation type="submission" date="1998-10" db="EMBL/GenBank/DDBJ databases">
        <title>dnaC encodes the delta prime subunit of DNA polymerase III.</title>
        <authorList>
            <person name="Ohta N."/>
            <person name="Newton A."/>
        </authorList>
    </citation>
    <scope>NUCLEOTIDE SEQUENCE [GENOMIC DNA]</scope>
    <source>
        <strain>ATCC 19089 / CIP 103742 / CB 15</strain>
    </source>
</reference>
<reference key="2">
    <citation type="journal article" date="2001" name="Proc. Natl. Acad. Sci. U.S.A.">
        <title>Complete genome sequence of Caulobacter crescentus.</title>
        <authorList>
            <person name="Nierman W.C."/>
            <person name="Feldblyum T.V."/>
            <person name="Laub M.T."/>
            <person name="Paulsen I.T."/>
            <person name="Nelson K.E."/>
            <person name="Eisen J.A."/>
            <person name="Heidelberg J.F."/>
            <person name="Alley M.R.K."/>
            <person name="Ohta N."/>
            <person name="Maddock J.R."/>
            <person name="Potocka I."/>
            <person name="Nelson W.C."/>
            <person name="Newton A."/>
            <person name="Stephens C."/>
            <person name="Phadke N.D."/>
            <person name="Ely B."/>
            <person name="DeBoy R.T."/>
            <person name="Dodson R.J."/>
            <person name="Durkin A.S."/>
            <person name="Gwinn M.L."/>
            <person name="Haft D.H."/>
            <person name="Kolonay J.F."/>
            <person name="Smit J."/>
            <person name="Craven M.B."/>
            <person name="Khouri H.M."/>
            <person name="Shetty J."/>
            <person name="Berry K.J."/>
            <person name="Utterback T.R."/>
            <person name="Tran K."/>
            <person name="Wolf A.M."/>
            <person name="Vamathevan J.J."/>
            <person name="Ermolaeva M.D."/>
            <person name="White O."/>
            <person name="Salzberg S.L."/>
            <person name="Venter J.C."/>
            <person name="Shapiro L."/>
            <person name="Fraser C.M."/>
        </authorList>
    </citation>
    <scope>NUCLEOTIDE SEQUENCE [LARGE SCALE GENOMIC DNA]</scope>
    <source>
        <strain>ATCC 19089 / CIP 103742 / CB 15</strain>
    </source>
</reference>
<feature type="chain" id="PRO_0000155257" description="Thymidylate kinase">
    <location>
        <begin position="1"/>
        <end position="208"/>
    </location>
</feature>
<feature type="binding site" evidence="2">
    <location>
        <begin position="11"/>
        <end position="18"/>
    </location>
    <ligand>
        <name>ATP</name>
        <dbReference type="ChEBI" id="CHEBI:30616"/>
    </ligand>
</feature>
<protein>
    <recommendedName>
        <fullName>Thymidylate kinase</fullName>
        <ecNumber>2.7.4.9</ecNumber>
    </recommendedName>
    <alternativeName>
        <fullName>dTMP kinase</fullName>
    </alternativeName>
</protein>